<evidence type="ECO:0000255" key="1">
    <source>
        <dbReference type="HAMAP-Rule" id="MF_00061"/>
    </source>
</evidence>
<gene>
    <name evidence="1" type="primary">ispE</name>
    <name type="ordered locus">UPA3_0640</name>
</gene>
<organism>
    <name type="scientific">Ureaplasma parvum serovar 3 (strain ATCC 27815 / 27 / NCTC 11736)</name>
    <dbReference type="NCBI Taxonomy" id="505682"/>
    <lineage>
        <taxon>Bacteria</taxon>
        <taxon>Bacillati</taxon>
        <taxon>Mycoplasmatota</taxon>
        <taxon>Mycoplasmoidales</taxon>
        <taxon>Mycoplasmoidaceae</taxon>
        <taxon>Ureaplasma</taxon>
    </lineage>
</organism>
<proteinExistence type="inferred from homology"/>
<sequence>MKVKSFAKIDLGYSVYKKQKNFTKHDFESIFILVENIYDDIEITKIEKNIDDVHYYNETNEIYVYSRLVHKTLEWIRHTYHIKNHYRINIKKRIPIGAGLGGGSSNAAAIMKYILEFEGIKEINYKDVVNKLGADIPFFLSGYKTAYISDYGSVLEDLTGQFKLNYEVYLMNVNVNTKIVFEKFDDNSWHVIKNNFKTIIKNLKENIVVNIHNDLQEYCFELYPNIKYKYNELLSDGFYTILSGAGSSFIRIKLKNKEDLIINEN</sequence>
<keyword id="KW-0067">ATP-binding</keyword>
<keyword id="KW-0414">Isoprene biosynthesis</keyword>
<keyword id="KW-0418">Kinase</keyword>
<keyword id="KW-0547">Nucleotide-binding</keyword>
<keyword id="KW-0808">Transferase</keyword>
<name>ISPE_UREP2</name>
<feature type="chain" id="PRO_1000075064" description="4-diphosphocytidyl-2-C-methyl-D-erythritol kinase">
    <location>
        <begin position="1"/>
        <end position="265"/>
    </location>
</feature>
<feature type="active site" evidence="1">
    <location>
        <position position="8"/>
    </location>
</feature>
<feature type="active site" evidence="1">
    <location>
        <position position="135"/>
    </location>
</feature>
<feature type="binding site" evidence="1">
    <location>
        <begin position="95"/>
        <end position="105"/>
    </location>
    <ligand>
        <name>ATP</name>
        <dbReference type="ChEBI" id="CHEBI:30616"/>
    </ligand>
</feature>
<accession>B1AJP1</accession>
<reference key="1">
    <citation type="submission" date="2008-02" db="EMBL/GenBank/DDBJ databases">
        <title>Genome sequence of Ureaplasma parvum serovar 3.</title>
        <authorList>
            <person name="Methe B.A."/>
            <person name="Glass J."/>
            <person name="Waites K."/>
            <person name="Shrivastava S."/>
        </authorList>
    </citation>
    <scope>NUCLEOTIDE SEQUENCE [LARGE SCALE GENOMIC DNA]</scope>
    <source>
        <strain>ATCC 27815 / 27 / NCTC 11736</strain>
    </source>
</reference>
<dbReference type="EC" id="2.7.1.148" evidence="1"/>
<dbReference type="EMBL" id="CP000942">
    <property type="protein sequence ID" value="ACA33186.1"/>
    <property type="molecule type" value="Genomic_DNA"/>
</dbReference>
<dbReference type="RefSeq" id="WP_006688809.1">
    <property type="nucleotide sequence ID" value="NC_010503.1"/>
</dbReference>
<dbReference type="SMR" id="B1AJP1"/>
<dbReference type="GeneID" id="29672539"/>
<dbReference type="KEGG" id="upa:UPA3_0640"/>
<dbReference type="HOGENOM" id="CLU_053057_2_0_14"/>
<dbReference type="UniPathway" id="UPA00056">
    <property type="reaction ID" value="UER00094"/>
</dbReference>
<dbReference type="Proteomes" id="UP000002162">
    <property type="component" value="Chromosome"/>
</dbReference>
<dbReference type="GO" id="GO:0050515">
    <property type="term" value="F:4-(cytidine 5'-diphospho)-2-C-methyl-D-erythritol kinase activity"/>
    <property type="evidence" value="ECO:0007669"/>
    <property type="project" value="UniProtKB-UniRule"/>
</dbReference>
<dbReference type="GO" id="GO:0005524">
    <property type="term" value="F:ATP binding"/>
    <property type="evidence" value="ECO:0007669"/>
    <property type="project" value="UniProtKB-UniRule"/>
</dbReference>
<dbReference type="GO" id="GO:0019288">
    <property type="term" value="P:isopentenyl diphosphate biosynthetic process, methylerythritol 4-phosphate pathway"/>
    <property type="evidence" value="ECO:0007669"/>
    <property type="project" value="UniProtKB-UniRule"/>
</dbReference>
<dbReference type="GO" id="GO:0016114">
    <property type="term" value="P:terpenoid biosynthetic process"/>
    <property type="evidence" value="ECO:0007669"/>
    <property type="project" value="InterPro"/>
</dbReference>
<dbReference type="Gene3D" id="3.30.230.10">
    <property type="match status" value="1"/>
</dbReference>
<dbReference type="Gene3D" id="3.30.70.890">
    <property type="entry name" value="GHMP kinase, C-terminal domain"/>
    <property type="match status" value="1"/>
</dbReference>
<dbReference type="HAMAP" id="MF_00061">
    <property type="entry name" value="IspE"/>
    <property type="match status" value="1"/>
</dbReference>
<dbReference type="InterPro" id="IPR036554">
    <property type="entry name" value="GHMP_kinase_C_sf"/>
</dbReference>
<dbReference type="InterPro" id="IPR006204">
    <property type="entry name" value="GHMP_kinase_N_dom"/>
</dbReference>
<dbReference type="InterPro" id="IPR004424">
    <property type="entry name" value="IspE"/>
</dbReference>
<dbReference type="InterPro" id="IPR020568">
    <property type="entry name" value="Ribosomal_Su5_D2-typ_SF"/>
</dbReference>
<dbReference type="InterPro" id="IPR014721">
    <property type="entry name" value="Ribsml_uS5_D2-typ_fold_subgr"/>
</dbReference>
<dbReference type="NCBIfam" id="NF004568">
    <property type="entry name" value="PRK05905.1"/>
    <property type="match status" value="1"/>
</dbReference>
<dbReference type="PANTHER" id="PTHR43527">
    <property type="entry name" value="4-DIPHOSPHOCYTIDYL-2-C-METHYL-D-ERYTHRITOL KINASE, CHLOROPLASTIC"/>
    <property type="match status" value="1"/>
</dbReference>
<dbReference type="PANTHER" id="PTHR43527:SF2">
    <property type="entry name" value="4-DIPHOSPHOCYTIDYL-2-C-METHYL-D-ERYTHRITOL KINASE, CHLOROPLASTIC"/>
    <property type="match status" value="1"/>
</dbReference>
<dbReference type="Pfam" id="PF00288">
    <property type="entry name" value="GHMP_kinases_N"/>
    <property type="match status" value="1"/>
</dbReference>
<dbReference type="PIRSF" id="PIRSF010376">
    <property type="entry name" value="IspE"/>
    <property type="match status" value="1"/>
</dbReference>
<dbReference type="SUPFAM" id="SSF55060">
    <property type="entry name" value="GHMP Kinase, C-terminal domain"/>
    <property type="match status" value="1"/>
</dbReference>
<dbReference type="SUPFAM" id="SSF54211">
    <property type="entry name" value="Ribosomal protein S5 domain 2-like"/>
    <property type="match status" value="1"/>
</dbReference>
<protein>
    <recommendedName>
        <fullName evidence="1">4-diphosphocytidyl-2-C-methyl-D-erythritol kinase</fullName>
        <shortName evidence="1">CMK</shortName>
        <ecNumber evidence="1">2.7.1.148</ecNumber>
    </recommendedName>
    <alternativeName>
        <fullName evidence="1">4-(cytidine-5'-diphospho)-2-C-methyl-D-erythritol kinase</fullName>
    </alternativeName>
</protein>
<comment type="function">
    <text evidence="1">Catalyzes the phosphorylation of the position 2 hydroxy group of 4-diphosphocytidyl-2C-methyl-D-erythritol.</text>
</comment>
<comment type="catalytic activity">
    <reaction evidence="1">
        <text>4-CDP-2-C-methyl-D-erythritol + ATP = 4-CDP-2-C-methyl-D-erythritol 2-phosphate + ADP + H(+)</text>
        <dbReference type="Rhea" id="RHEA:18437"/>
        <dbReference type="ChEBI" id="CHEBI:15378"/>
        <dbReference type="ChEBI" id="CHEBI:30616"/>
        <dbReference type="ChEBI" id="CHEBI:57823"/>
        <dbReference type="ChEBI" id="CHEBI:57919"/>
        <dbReference type="ChEBI" id="CHEBI:456216"/>
        <dbReference type="EC" id="2.7.1.148"/>
    </reaction>
</comment>
<comment type="pathway">
    <text evidence="1">Isoprenoid biosynthesis; isopentenyl diphosphate biosynthesis via DXP pathway; isopentenyl diphosphate from 1-deoxy-D-xylulose 5-phosphate: step 3/6.</text>
</comment>
<comment type="similarity">
    <text evidence="1">Belongs to the GHMP kinase family. IspE subfamily.</text>
</comment>